<accession>B2S3E8</accession>
<name>ASNA_TREPS</name>
<gene>
    <name evidence="1" type="primary">asnA</name>
    <name type="ordered locus">TPASS_0556</name>
</gene>
<dbReference type="EC" id="6.3.1.1" evidence="1"/>
<dbReference type="EMBL" id="CP000805">
    <property type="protein sequence ID" value="ACD70977.1"/>
    <property type="molecule type" value="Genomic_DNA"/>
</dbReference>
<dbReference type="RefSeq" id="WP_010882003.1">
    <property type="nucleotide sequence ID" value="NC_021508.1"/>
</dbReference>
<dbReference type="SMR" id="B2S3E8"/>
<dbReference type="GeneID" id="93876326"/>
<dbReference type="KEGG" id="tpp:TPASS_0556"/>
<dbReference type="PATRIC" id="fig|455434.6.peg.555"/>
<dbReference type="UniPathway" id="UPA00134">
    <property type="reaction ID" value="UER00194"/>
</dbReference>
<dbReference type="Proteomes" id="UP000001202">
    <property type="component" value="Chromosome"/>
</dbReference>
<dbReference type="GO" id="GO:0005829">
    <property type="term" value="C:cytosol"/>
    <property type="evidence" value="ECO:0007669"/>
    <property type="project" value="TreeGrafter"/>
</dbReference>
<dbReference type="GO" id="GO:0004071">
    <property type="term" value="F:aspartate-ammonia ligase activity"/>
    <property type="evidence" value="ECO:0007669"/>
    <property type="project" value="UniProtKB-UniRule"/>
</dbReference>
<dbReference type="GO" id="GO:0005524">
    <property type="term" value="F:ATP binding"/>
    <property type="evidence" value="ECO:0007669"/>
    <property type="project" value="UniProtKB-UniRule"/>
</dbReference>
<dbReference type="GO" id="GO:0070981">
    <property type="term" value="P:L-asparagine biosynthetic process"/>
    <property type="evidence" value="ECO:0007669"/>
    <property type="project" value="UniProtKB-UniRule"/>
</dbReference>
<dbReference type="CDD" id="cd00645">
    <property type="entry name" value="AsnA"/>
    <property type="match status" value="1"/>
</dbReference>
<dbReference type="Gene3D" id="3.30.930.10">
    <property type="entry name" value="Bira Bifunctional Protein, Domain 2"/>
    <property type="match status" value="1"/>
</dbReference>
<dbReference type="HAMAP" id="MF_00555">
    <property type="entry name" value="AsnA"/>
    <property type="match status" value="1"/>
</dbReference>
<dbReference type="InterPro" id="IPR006195">
    <property type="entry name" value="aa-tRNA-synth_II"/>
</dbReference>
<dbReference type="InterPro" id="IPR045864">
    <property type="entry name" value="aa-tRNA-synth_II/BPL/LPL"/>
</dbReference>
<dbReference type="InterPro" id="IPR004618">
    <property type="entry name" value="AsnA"/>
</dbReference>
<dbReference type="NCBIfam" id="TIGR00669">
    <property type="entry name" value="asnA"/>
    <property type="match status" value="1"/>
</dbReference>
<dbReference type="PANTHER" id="PTHR30073">
    <property type="entry name" value="ASPARTATE--AMMONIA LIGASE"/>
    <property type="match status" value="1"/>
</dbReference>
<dbReference type="PANTHER" id="PTHR30073:SF5">
    <property type="entry name" value="ASPARTATE--AMMONIA LIGASE"/>
    <property type="match status" value="1"/>
</dbReference>
<dbReference type="Pfam" id="PF03590">
    <property type="entry name" value="AsnA"/>
    <property type="match status" value="1"/>
</dbReference>
<dbReference type="PIRSF" id="PIRSF001555">
    <property type="entry name" value="Asp_ammon_ligase"/>
    <property type="match status" value="1"/>
</dbReference>
<dbReference type="SUPFAM" id="SSF55681">
    <property type="entry name" value="Class II aaRS and biotin synthetases"/>
    <property type="match status" value="1"/>
</dbReference>
<dbReference type="PROSITE" id="PS50862">
    <property type="entry name" value="AA_TRNA_LIGASE_II"/>
    <property type="match status" value="1"/>
</dbReference>
<comment type="catalytic activity">
    <reaction evidence="1">
        <text>L-aspartate + NH4(+) + ATP = L-asparagine + AMP + diphosphate + H(+)</text>
        <dbReference type="Rhea" id="RHEA:11372"/>
        <dbReference type="ChEBI" id="CHEBI:15378"/>
        <dbReference type="ChEBI" id="CHEBI:28938"/>
        <dbReference type="ChEBI" id="CHEBI:29991"/>
        <dbReference type="ChEBI" id="CHEBI:30616"/>
        <dbReference type="ChEBI" id="CHEBI:33019"/>
        <dbReference type="ChEBI" id="CHEBI:58048"/>
        <dbReference type="ChEBI" id="CHEBI:456215"/>
        <dbReference type="EC" id="6.3.1.1"/>
    </reaction>
</comment>
<comment type="pathway">
    <text evidence="1">Amino-acid biosynthesis; L-asparagine biosynthesis; L-asparagine from L-aspartate (ammonia route): step 1/1.</text>
</comment>
<comment type="subcellular location">
    <subcellularLocation>
        <location evidence="1">Cytoplasm</location>
    </subcellularLocation>
</comment>
<comment type="similarity">
    <text evidence="1">Belongs to the class-II aminoacyl-tRNA synthetase family. AsnA subfamily.</text>
</comment>
<feature type="chain" id="PRO_1000129136" description="Aspartate--ammonia ligase">
    <location>
        <begin position="1"/>
        <end position="330"/>
    </location>
</feature>
<proteinExistence type="inferred from homology"/>
<keyword id="KW-0028">Amino-acid biosynthesis</keyword>
<keyword id="KW-0061">Asparagine biosynthesis</keyword>
<keyword id="KW-0067">ATP-binding</keyword>
<keyword id="KW-0963">Cytoplasm</keyword>
<keyword id="KW-0436">Ligase</keyword>
<keyword id="KW-0547">Nucleotide-binding</keyword>
<evidence type="ECO:0000255" key="1">
    <source>
        <dbReference type="HAMAP-Rule" id="MF_00555"/>
    </source>
</evidence>
<protein>
    <recommendedName>
        <fullName evidence="1">Aspartate--ammonia ligase</fullName>
        <ecNumber evidence="1">6.3.1.1</ecNumber>
    </recommendedName>
    <alternativeName>
        <fullName evidence="1">Asparagine synthetase A</fullName>
    </alternativeName>
</protein>
<organism>
    <name type="scientific">Treponema pallidum subsp. pallidum (strain SS14)</name>
    <dbReference type="NCBI Taxonomy" id="455434"/>
    <lineage>
        <taxon>Bacteria</taxon>
        <taxon>Pseudomonadati</taxon>
        <taxon>Spirochaetota</taxon>
        <taxon>Spirochaetia</taxon>
        <taxon>Spirochaetales</taxon>
        <taxon>Treponemataceae</taxon>
        <taxon>Treponema</taxon>
    </lineage>
</organism>
<sequence length="330" mass="36856">MEKSFILQQQGISFAKHTFTQKLMEHLGLIEVQGPLLSQVGDGIQDGLSGREKAVSVSVKQIPGTAFEVVHSLAKWKRHTLARYGFQDNEGLFVHMIALRPDEDFLDQVRSVCVDQWDWEKVVPVGSRNLAYLKDTVRKVYGALRESEVLVSERFGLRAFLPADIVFVQSEELVRRYPHLDSKGREDAICKEHGAVFLIGIGGVLSDGKPHDVRAPDYDDWTTPSEGEYKGLNGDILVWNPVLGRAFEVSSMGIRVDEGALRTQLALTGDEDSLACSWHQDLINGRLPQSIGGGIGQSRLAMLLLQRKHIGEVQASVWPRSVREEFENIL</sequence>
<reference key="1">
    <citation type="journal article" date="2008" name="BMC Microbiol.">
        <title>Complete genome sequence of Treponema pallidum ssp. pallidum strain SS14 determined with oligonucleotide arrays.</title>
        <authorList>
            <person name="Matejkova P."/>
            <person name="Strouhal M."/>
            <person name="Smajs D."/>
            <person name="Norris S.J."/>
            <person name="Palzkill T."/>
            <person name="Petrosino J.F."/>
            <person name="Sodergren E."/>
            <person name="Norton J.E."/>
            <person name="Singh J."/>
            <person name="Richmond T.A."/>
            <person name="Molla M.N."/>
            <person name="Albert T.J."/>
            <person name="Weinstock G.M."/>
        </authorList>
    </citation>
    <scope>NUCLEOTIDE SEQUENCE [LARGE SCALE GENOMIC DNA]</scope>
    <source>
        <strain>SS14</strain>
    </source>
</reference>